<accession>Q18CW0</accession>
<gene>
    <name evidence="1" type="primary">purH</name>
    <name type="ordered locus">CD630_02230</name>
</gene>
<proteinExistence type="inferred from homology"/>
<evidence type="ECO:0000255" key="1">
    <source>
        <dbReference type="HAMAP-Rule" id="MF_00139"/>
    </source>
</evidence>
<evidence type="ECO:0000255" key="2">
    <source>
        <dbReference type="PROSITE-ProRule" id="PRU01202"/>
    </source>
</evidence>
<comment type="catalytic activity">
    <reaction evidence="1">
        <text>(6R)-10-formyltetrahydrofolate + 5-amino-1-(5-phospho-beta-D-ribosyl)imidazole-4-carboxamide = 5-formamido-1-(5-phospho-D-ribosyl)imidazole-4-carboxamide + (6S)-5,6,7,8-tetrahydrofolate</text>
        <dbReference type="Rhea" id="RHEA:22192"/>
        <dbReference type="ChEBI" id="CHEBI:57453"/>
        <dbReference type="ChEBI" id="CHEBI:58467"/>
        <dbReference type="ChEBI" id="CHEBI:58475"/>
        <dbReference type="ChEBI" id="CHEBI:195366"/>
        <dbReference type="EC" id="2.1.2.3"/>
    </reaction>
</comment>
<comment type="catalytic activity">
    <reaction evidence="1">
        <text>IMP + H2O = 5-formamido-1-(5-phospho-D-ribosyl)imidazole-4-carboxamide</text>
        <dbReference type="Rhea" id="RHEA:18445"/>
        <dbReference type="ChEBI" id="CHEBI:15377"/>
        <dbReference type="ChEBI" id="CHEBI:58053"/>
        <dbReference type="ChEBI" id="CHEBI:58467"/>
        <dbReference type="EC" id="3.5.4.10"/>
    </reaction>
</comment>
<comment type="pathway">
    <text evidence="1">Purine metabolism; IMP biosynthesis via de novo pathway; 5-formamido-1-(5-phospho-D-ribosyl)imidazole-4-carboxamide from 5-amino-1-(5-phospho-D-ribosyl)imidazole-4-carboxamide (10-formyl THF route): step 1/1.</text>
</comment>
<comment type="pathway">
    <text evidence="1">Purine metabolism; IMP biosynthesis via de novo pathway; IMP from 5-formamido-1-(5-phospho-D-ribosyl)imidazole-4-carboxamide: step 1/1.</text>
</comment>
<comment type="domain">
    <text evidence="1">The IMP cyclohydrolase activity resides in the N-terminal region.</text>
</comment>
<comment type="similarity">
    <text evidence="1">Belongs to the PurH family.</text>
</comment>
<organism>
    <name type="scientific">Clostridioides difficile (strain 630)</name>
    <name type="common">Peptoclostridium difficile</name>
    <dbReference type="NCBI Taxonomy" id="272563"/>
    <lineage>
        <taxon>Bacteria</taxon>
        <taxon>Bacillati</taxon>
        <taxon>Bacillota</taxon>
        <taxon>Clostridia</taxon>
        <taxon>Peptostreptococcales</taxon>
        <taxon>Peptostreptococcaceae</taxon>
        <taxon>Clostridioides</taxon>
    </lineage>
</organism>
<dbReference type="EC" id="2.1.2.3" evidence="1"/>
<dbReference type="EC" id="3.5.4.10" evidence="1"/>
<dbReference type="EMBL" id="AM180355">
    <property type="protein sequence ID" value="CAJ67044.1"/>
    <property type="molecule type" value="Genomic_DNA"/>
</dbReference>
<dbReference type="RefSeq" id="WP_003436063.1">
    <property type="nucleotide sequence ID" value="NZ_JAUPES010000004.1"/>
</dbReference>
<dbReference type="RefSeq" id="YP_001086691.1">
    <property type="nucleotide sequence ID" value="NC_009089.1"/>
</dbReference>
<dbReference type="SMR" id="Q18CW0"/>
<dbReference type="STRING" id="272563.CD630_02230"/>
<dbReference type="EnsemblBacteria" id="CAJ67044">
    <property type="protein sequence ID" value="CAJ67044"/>
    <property type="gene ID" value="CD630_02230"/>
</dbReference>
<dbReference type="GeneID" id="66352770"/>
<dbReference type="KEGG" id="cdf:CD630_02230"/>
<dbReference type="KEGG" id="pdc:CDIF630_00345"/>
<dbReference type="PATRIC" id="fig|272563.120.peg.239"/>
<dbReference type="eggNOG" id="COG0138">
    <property type="taxonomic scope" value="Bacteria"/>
</dbReference>
<dbReference type="OrthoDB" id="9802065at2"/>
<dbReference type="PhylomeDB" id="Q18CW0"/>
<dbReference type="BioCyc" id="PDIF272563:G12WB-326-MONOMER"/>
<dbReference type="UniPathway" id="UPA00074">
    <property type="reaction ID" value="UER00133"/>
</dbReference>
<dbReference type="UniPathway" id="UPA00074">
    <property type="reaction ID" value="UER00135"/>
</dbReference>
<dbReference type="Proteomes" id="UP000001978">
    <property type="component" value="Chromosome"/>
</dbReference>
<dbReference type="GO" id="GO:0005829">
    <property type="term" value="C:cytosol"/>
    <property type="evidence" value="ECO:0007669"/>
    <property type="project" value="TreeGrafter"/>
</dbReference>
<dbReference type="GO" id="GO:0003937">
    <property type="term" value="F:IMP cyclohydrolase activity"/>
    <property type="evidence" value="ECO:0007669"/>
    <property type="project" value="UniProtKB-UniRule"/>
</dbReference>
<dbReference type="GO" id="GO:0004643">
    <property type="term" value="F:phosphoribosylaminoimidazolecarboxamide formyltransferase activity"/>
    <property type="evidence" value="ECO:0007669"/>
    <property type="project" value="UniProtKB-UniRule"/>
</dbReference>
<dbReference type="GO" id="GO:0006189">
    <property type="term" value="P:'de novo' IMP biosynthetic process"/>
    <property type="evidence" value="ECO:0007669"/>
    <property type="project" value="UniProtKB-UniRule"/>
</dbReference>
<dbReference type="CDD" id="cd01421">
    <property type="entry name" value="IMPCH"/>
    <property type="match status" value="1"/>
</dbReference>
<dbReference type="FunFam" id="3.40.140.20:FF:000001">
    <property type="entry name" value="Bifunctional purine biosynthesis protein PurH"/>
    <property type="match status" value="1"/>
</dbReference>
<dbReference type="FunFam" id="3.40.50.1380:FF:000001">
    <property type="entry name" value="Bifunctional purine biosynthesis protein PurH"/>
    <property type="match status" value="1"/>
</dbReference>
<dbReference type="Gene3D" id="3.40.140.20">
    <property type="match status" value="2"/>
</dbReference>
<dbReference type="Gene3D" id="3.40.50.1380">
    <property type="entry name" value="Methylglyoxal synthase-like domain"/>
    <property type="match status" value="1"/>
</dbReference>
<dbReference type="HAMAP" id="MF_00139">
    <property type="entry name" value="PurH"/>
    <property type="match status" value="1"/>
</dbReference>
<dbReference type="InterPro" id="IPR024051">
    <property type="entry name" value="AICAR_Tfase_dup_dom_sf"/>
</dbReference>
<dbReference type="InterPro" id="IPR016193">
    <property type="entry name" value="Cytidine_deaminase-like"/>
</dbReference>
<dbReference type="InterPro" id="IPR011607">
    <property type="entry name" value="MGS-like_dom"/>
</dbReference>
<dbReference type="InterPro" id="IPR036914">
    <property type="entry name" value="MGS-like_dom_sf"/>
</dbReference>
<dbReference type="InterPro" id="IPR002695">
    <property type="entry name" value="PurH-like"/>
</dbReference>
<dbReference type="NCBIfam" id="NF002049">
    <property type="entry name" value="PRK00881.1"/>
    <property type="match status" value="1"/>
</dbReference>
<dbReference type="NCBIfam" id="TIGR00355">
    <property type="entry name" value="purH"/>
    <property type="match status" value="1"/>
</dbReference>
<dbReference type="PANTHER" id="PTHR11692:SF0">
    <property type="entry name" value="BIFUNCTIONAL PURINE BIOSYNTHESIS PROTEIN ATIC"/>
    <property type="match status" value="1"/>
</dbReference>
<dbReference type="PANTHER" id="PTHR11692">
    <property type="entry name" value="BIFUNCTIONAL PURINE BIOSYNTHESIS PROTEIN PURH"/>
    <property type="match status" value="1"/>
</dbReference>
<dbReference type="Pfam" id="PF01808">
    <property type="entry name" value="AICARFT_IMPCHas"/>
    <property type="match status" value="1"/>
</dbReference>
<dbReference type="Pfam" id="PF02142">
    <property type="entry name" value="MGS"/>
    <property type="match status" value="1"/>
</dbReference>
<dbReference type="PIRSF" id="PIRSF000414">
    <property type="entry name" value="AICARFT_IMPCHas"/>
    <property type="match status" value="1"/>
</dbReference>
<dbReference type="SMART" id="SM00798">
    <property type="entry name" value="AICARFT_IMPCHas"/>
    <property type="match status" value="1"/>
</dbReference>
<dbReference type="SMART" id="SM00851">
    <property type="entry name" value="MGS"/>
    <property type="match status" value="1"/>
</dbReference>
<dbReference type="SUPFAM" id="SSF53927">
    <property type="entry name" value="Cytidine deaminase-like"/>
    <property type="match status" value="1"/>
</dbReference>
<dbReference type="SUPFAM" id="SSF52335">
    <property type="entry name" value="Methylglyoxal synthase-like"/>
    <property type="match status" value="1"/>
</dbReference>
<dbReference type="PROSITE" id="PS51855">
    <property type="entry name" value="MGS"/>
    <property type="match status" value="1"/>
</dbReference>
<name>PUR9_CLOD6</name>
<protein>
    <recommendedName>
        <fullName evidence="1">Bifunctional purine biosynthesis protein PurH</fullName>
    </recommendedName>
    <domain>
        <recommendedName>
            <fullName evidence="1">Phosphoribosylaminoimidazolecarboxamide formyltransferase</fullName>
            <ecNumber evidence="1">2.1.2.3</ecNumber>
        </recommendedName>
        <alternativeName>
            <fullName evidence="1">AICAR transformylase</fullName>
        </alternativeName>
    </domain>
    <domain>
        <recommendedName>
            <fullName evidence="1">IMP cyclohydrolase</fullName>
            <ecNumber evidence="1">3.5.4.10</ecNumber>
        </recommendedName>
        <alternativeName>
            <fullName evidence="1">ATIC</fullName>
        </alternativeName>
        <alternativeName>
            <fullName evidence="1">IMP synthase</fullName>
        </alternativeName>
        <alternativeName>
            <fullName evidence="1">Inosinicase</fullName>
        </alternativeName>
    </domain>
</protein>
<feature type="chain" id="PRO_1000018878" description="Bifunctional purine biosynthesis protein PurH">
    <location>
        <begin position="1"/>
        <end position="510"/>
    </location>
</feature>
<feature type="domain" description="MGS-like" evidence="2">
    <location>
        <begin position="1"/>
        <end position="144"/>
    </location>
</feature>
<keyword id="KW-0378">Hydrolase</keyword>
<keyword id="KW-0511">Multifunctional enzyme</keyword>
<keyword id="KW-0658">Purine biosynthesis</keyword>
<keyword id="KW-1185">Reference proteome</keyword>
<keyword id="KW-0808">Transferase</keyword>
<reference key="1">
    <citation type="journal article" date="2006" name="Nat. Genet.">
        <title>The multidrug-resistant human pathogen Clostridium difficile has a highly mobile, mosaic genome.</title>
        <authorList>
            <person name="Sebaihia M."/>
            <person name="Wren B.W."/>
            <person name="Mullany P."/>
            <person name="Fairweather N.F."/>
            <person name="Minton N."/>
            <person name="Stabler R."/>
            <person name="Thomson N.R."/>
            <person name="Roberts A.P."/>
            <person name="Cerdeno-Tarraga A.M."/>
            <person name="Wang H."/>
            <person name="Holden M.T.G."/>
            <person name="Wright A."/>
            <person name="Churcher C."/>
            <person name="Quail M.A."/>
            <person name="Baker S."/>
            <person name="Bason N."/>
            <person name="Brooks K."/>
            <person name="Chillingworth T."/>
            <person name="Cronin A."/>
            <person name="Davis P."/>
            <person name="Dowd L."/>
            <person name="Fraser A."/>
            <person name="Feltwell T."/>
            <person name="Hance Z."/>
            <person name="Holroyd S."/>
            <person name="Jagels K."/>
            <person name="Moule S."/>
            <person name="Mungall K."/>
            <person name="Price C."/>
            <person name="Rabbinowitsch E."/>
            <person name="Sharp S."/>
            <person name="Simmonds M."/>
            <person name="Stevens K."/>
            <person name="Unwin L."/>
            <person name="Whithead S."/>
            <person name="Dupuy B."/>
            <person name="Dougan G."/>
            <person name="Barrell B."/>
            <person name="Parkhill J."/>
        </authorList>
    </citation>
    <scope>NUCLEOTIDE SEQUENCE [LARGE SCALE GENOMIC DNA]</scope>
    <source>
        <strain>630</strain>
    </source>
</reference>
<sequence>MSKRALISVTDKTGVVEFAKELNKLDYEIISTGNTFKTLKENGVNVMQVEDVTNFPEILDGRVKTLNPYIHGGILYKRDKESHVETVNEHKIHSIDLVAVNLYDFEGTLKAGKSHDEIIENIDIGGPSMIRSAAKNYKDVIVVVDIKDYDSIIEKLKTDTMTLEDRKKLSYKAFSTTGRYDALISSYFAGEVGDTYPDILNLTFQKEQTLRYGENPHQNGFLYSQSNAKNPILNYEQLGGKELSFNNLNDLHGCLEVMREFKDSEEVVSVAIKHANSCGVGLGKDAFEAYTKCYEADKVSIFGGIVGITSTIDKATAEKLNEIFLEIVVAYDFEPEALEILKQKKNLRILKLAKIENSLQPYEMKYLDGKLLIQDRNNILAEKSENVTKEKPTDAQLKDMEFGMRVVKNMKSNAIAIVKNGQTLALGCGQTSRIWALKNALENNKDKDFTGAVLASDAFFPFDDCVTLAHEYGISAVVQPGGSIKDKDSIEACDKYDMVMVFTGIRHFKH</sequence>